<gene>
    <name evidence="1" type="primary">asnA</name>
    <name type="ordered locus">MGAS9429_Spy1263</name>
</gene>
<feature type="chain" id="PRO_1000017966" description="Aspartate--ammonia ligase">
    <location>
        <begin position="1"/>
        <end position="330"/>
    </location>
</feature>
<accession>Q1JKW9</accession>
<dbReference type="EC" id="6.3.1.1" evidence="1"/>
<dbReference type="EMBL" id="CP000259">
    <property type="protein sequence ID" value="ABF32450.1"/>
    <property type="molecule type" value="Genomic_DNA"/>
</dbReference>
<dbReference type="RefSeq" id="WP_002983817.1">
    <property type="nucleotide sequence ID" value="NC_008021.1"/>
</dbReference>
<dbReference type="SMR" id="Q1JKW9"/>
<dbReference type="KEGG" id="spk:MGAS9429_Spy1263"/>
<dbReference type="HOGENOM" id="CLU_071543_0_0_9"/>
<dbReference type="UniPathway" id="UPA00134">
    <property type="reaction ID" value="UER00194"/>
</dbReference>
<dbReference type="Proteomes" id="UP000002433">
    <property type="component" value="Chromosome"/>
</dbReference>
<dbReference type="GO" id="GO:0005829">
    <property type="term" value="C:cytosol"/>
    <property type="evidence" value="ECO:0007669"/>
    <property type="project" value="TreeGrafter"/>
</dbReference>
<dbReference type="GO" id="GO:0004071">
    <property type="term" value="F:aspartate-ammonia ligase activity"/>
    <property type="evidence" value="ECO:0007669"/>
    <property type="project" value="UniProtKB-UniRule"/>
</dbReference>
<dbReference type="GO" id="GO:0005524">
    <property type="term" value="F:ATP binding"/>
    <property type="evidence" value="ECO:0007669"/>
    <property type="project" value="UniProtKB-UniRule"/>
</dbReference>
<dbReference type="GO" id="GO:0140096">
    <property type="term" value="F:catalytic activity, acting on a protein"/>
    <property type="evidence" value="ECO:0007669"/>
    <property type="project" value="UniProtKB-ARBA"/>
</dbReference>
<dbReference type="GO" id="GO:0016740">
    <property type="term" value="F:transferase activity"/>
    <property type="evidence" value="ECO:0007669"/>
    <property type="project" value="UniProtKB-ARBA"/>
</dbReference>
<dbReference type="GO" id="GO:0070981">
    <property type="term" value="P:L-asparagine biosynthetic process"/>
    <property type="evidence" value="ECO:0007669"/>
    <property type="project" value="UniProtKB-UniRule"/>
</dbReference>
<dbReference type="CDD" id="cd00645">
    <property type="entry name" value="AsnA"/>
    <property type="match status" value="1"/>
</dbReference>
<dbReference type="Gene3D" id="3.30.930.10">
    <property type="entry name" value="Bira Bifunctional Protein, Domain 2"/>
    <property type="match status" value="1"/>
</dbReference>
<dbReference type="HAMAP" id="MF_00555">
    <property type="entry name" value="AsnA"/>
    <property type="match status" value="1"/>
</dbReference>
<dbReference type="InterPro" id="IPR006195">
    <property type="entry name" value="aa-tRNA-synth_II"/>
</dbReference>
<dbReference type="InterPro" id="IPR045864">
    <property type="entry name" value="aa-tRNA-synth_II/BPL/LPL"/>
</dbReference>
<dbReference type="InterPro" id="IPR004618">
    <property type="entry name" value="AsnA"/>
</dbReference>
<dbReference type="NCBIfam" id="TIGR00669">
    <property type="entry name" value="asnA"/>
    <property type="match status" value="1"/>
</dbReference>
<dbReference type="PANTHER" id="PTHR30073">
    <property type="entry name" value="ASPARTATE--AMMONIA LIGASE"/>
    <property type="match status" value="1"/>
</dbReference>
<dbReference type="PANTHER" id="PTHR30073:SF5">
    <property type="entry name" value="ASPARTATE--AMMONIA LIGASE"/>
    <property type="match status" value="1"/>
</dbReference>
<dbReference type="Pfam" id="PF03590">
    <property type="entry name" value="AsnA"/>
    <property type="match status" value="1"/>
</dbReference>
<dbReference type="PIRSF" id="PIRSF001555">
    <property type="entry name" value="Asp_ammon_ligase"/>
    <property type="match status" value="1"/>
</dbReference>
<dbReference type="SUPFAM" id="SSF55681">
    <property type="entry name" value="Class II aaRS and biotin synthetases"/>
    <property type="match status" value="1"/>
</dbReference>
<dbReference type="PROSITE" id="PS50862">
    <property type="entry name" value="AA_TRNA_LIGASE_II"/>
    <property type="match status" value="1"/>
</dbReference>
<reference key="1">
    <citation type="journal article" date="2006" name="Proc. Natl. Acad. Sci. U.S.A.">
        <title>Molecular genetic anatomy of inter- and intraserotype variation in the human bacterial pathogen group A Streptococcus.</title>
        <authorList>
            <person name="Beres S.B."/>
            <person name="Richter E.W."/>
            <person name="Nagiec M.J."/>
            <person name="Sumby P."/>
            <person name="Porcella S.F."/>
            <person name="DeLeo F.R."/>
            <person name="Musser J.M."/>
        </authorList>
    </citation>
    <scope>NUCLEOTIDE SEQUENCE [LARGE SCALE GENOMIC DNA]</scope>
    <source>
        <strain>MGAS9429</strain>
    </source>
</reference>
<keyword id="KW-0028">Amino-acid biosynthesis</keyword>
<keyword id="KW-0061">Asparagine biosynthesis</keyword>
<keyword id="KW-0067">ATP-binding</keyword>
<keyword id="KW-0963">Cytoplasm</keyword>
<keyword id="KW-0436">Ligase</keyword>
<keyword id="KW-0547">Nucleotide-binding</keyword>
<comment type="catalytic activity">
    <reaction evidence="1">
        <text>L-aspartate + NH4(+) + ATP = L-asparagine + AMP + diphosphate + H(+)</text>
        <dbReference type="Rhea" id="RHEA:11372"/>
        <dbReference type="ChEBI" id="CHEBI:15378"/>
        <dbReference type="ChEBI" id="CHEBI:28938"/>
        <dbReference type="ChEBI" id="CHEBI:29991"/>
        <dbReference type="ChEBI" id="CHEBI:30616"/>
        <dbReference type="ChEBI" id="CHEBI:33019"/>
        <dbReference type="ChEBI" id="CHEBI:58048"/>
        <dbReference type="ChEBI" id="CHEBI:456215"/>
        <dbReference type="EC" id="6.3.1.1"/>
    </reaction>
</comment>
<comment type="pathway">
    <text evidence="1">Amino-acid biosynthesis; L-asparagine biosynthesis; L-asparagine from L-aspartate (ammonia route): step 1/1.</text>
</comment>
<comment type="subcellular location">
    <subcellularLocation>
        <location evidence="1">Cytoplasm</location>
    </subcellularLocation>
</comment>
<comment type="similarity">
    <text evidence="1">Belongs to the class-II aminoacyl-tRNA synthetase family. AsnA subfamily.</text>
</comment>
<proteinExistence type="inferred from homology"/>
<sequence>MKKSFIHQQEEISFVKNTFTQYLIAKLDVVEVQGPILSRVGDGMQDNLSGTENPVSVNVLKIPNATFEVVHSLAKWKRHTLARFGFNEGEGLVVNMKALRPDEDSLDQTHSVYVDQWDWEKVIPDGKRNLAYLKETVETIYKVIRLTELAVEARYDIEAVLPKKITFIHTEELVAKYPDLTPKERENAITKEFGAVFLIGIGGVLPDGKPHDGRAPDYDDWTTETENGYHGLNGDILVWNDQLGSAFELSSMGIRVDEEALKRQVEMTGDQDRLAFDWHKSLLNGLFPLTIGGGIGQSRMVMFLLRKKHIGEVQTSVWPQEVRDSYDNIL</sequence>
<organism>
    <name type="scientific">Streptococcus pyogenes serotype M12 (strain MGAS9429)</name>
    <dbReference type="NCBI Taxonomy" id="370551"/>
    <lineage>
        <taxon>Bacteria</taxon>
        <taxon>Bacillati</taxon>
        <taxon>Bacillota</taxon>
        <taxon>Bacilli</taxon>
        <taxon>Lactobacillales</taxon>
        <taxon>Streptococcaceae</taxon>
        <taxon>Streptococcus</taxon>
    </lineage>
</organism>
<evidence type="ECO:0000255" key="1">
    <source>
        <dbReference type="HAMAP-Rule" id="MF_00555"/>
    </source>
</evidence>
<name>ASNA_STRPC</name>
<protein>
    <recommendedName>
        <fullName evidence="1">Aspartate--ammonia ligase</fullName>
        <ecNumber evidence="1">6.3.1.1</ecNumber>
    </recommendedName>
    <alternativeName>
        <fullName evidence="1">Asparagine synthetase A</fullName>
    </alternativeName>
</protein>